<organism>
    <name type="scientific">Vibrio cholerae serotype O1 (strain ATCC 39315 / El Tor Inaba N16961)</name>
    <dbReference type="NCBI Taxonomy" id="243277"/>
    <lineage>
        <taxon>Bacteria</taxon>
        <taxon>Pseudomonadati</taxon>
        <taxon>Pseudomonadota</taxon>
        <taxon>Gammaproteobacteria</taxon>
        <taxon>Vibrionales</taxon>
        <taxon>Vibrionaceae</taxon>
        <taxon>Vibrio</taxon>
    </lineage>
</organism>
<protein>
    <recommendedName>
        <fullName evidence="1">Enolase</fullName>
        <ecNumber evidence="1">4.2.1.11</ecNumber>
    </recommendedName>
    <alternativeName>
        <fullName evidence="1">2-phospho-D-glycerate hydro-lyase</fullName>
    </alternativeName>
    <alternativeName>
        <fullName evidence="1">2-phosphoglycerate dehydratase</fullName>
    </alternativeName>
</protein>
<evidence type="ECO:0000255" key="1">
    <source>
        <dbReference type="HAMAP-Rule" id="MF_00318"/>
    </source>
</evidence>
<name>ENO_VIBCH</name>
<sequence>MSKIVKVLGREIIDSRGNPTVEAEVHLEGGFVGMAAAPSGASTGSREALELRDGDKSRFLGKGVLKALAAVNGPIADALVGKDAKDQATIDQIMIDLDGTENKSNFGANAILAVSLANAKAAAAAKGMPLYEHIAELNGTPGVFSMPLPMMNIINGGEHADNNVDIQEFMIQPVGAKTLKEAVRMGAEVFHNLAKVLKSKGYNTAVGDEGGFAPNLKSNAEALEVIAEAVAAAGYKLGTDITLAMDCAASEFYDAEKKEYNLKGEGRIFTSNGFSDFLEELTEKFPIVSIEDGLDESDWEGFAYQTEKLGKKIQIVGDDLFVTNTKILKRGIDNGIANSILIKFNQIGSLTETLAAIKMAKDAGYTAVISHRSGETEDATIADLAVGTAAGQIKTGSMSRSDRVAKYNQLIRIEEALGSRAPFNGLKEVKGQA</sequence>
<gene>
    <name evidence="1" type="primary">eno</name>
    <name type="ordered locus">VC_2447</name>
</gene>
<proteinExistence type="inferred from homology"/>
<dbReference type="EC" id="4.2.1.11" evidence="1"/>
<dbReference type="EMBL" id="AE003852">
    <property type="protein sequence ID" value="AAF95589.1"/>
    <property type="molecule type" value="Genomic_DNA"/>
</dbReference>
<dbReference type="PIR" id="E82076">
    <property type="entry name" value="E82076"/>
</dbReference>
<dbReference type="RefSeq" id="NP_232076.1">
    <property type="nucleotide sequence ID" value="NC_002505.1"/>
</dbReference>
<dbReference type="RefSeq" id="WP_000036741.1">
    <property type="nucleotide sequence ID" value="NZ_LT906614.1"/>
</dbReference>
<dbReference type="SMR" id="Q9KPC5"/>
<dbReference type="STRING" id="243277.VC_2447"/>
<dbReference type="DNASU" id="2612989"/>
<dbReference type="EnsemblBacteria" id="AAF95589">
    <property type="protein sequence ID" value="AAF95589"/>
    <property type="gene ID" value="VC_2447"/>
</dbReference>
<dbReference type="GeneID" id="69718946"/>
<dbReference type="KEGG" id="vch:VC_2447"/>
<dbReference type="PATRIC" id="fig|243277.26.peg.2332"/>
<dbReference type="eggNOG" id="COG0148">
    <property type="taxonomic scope" value="Bacteria"/>
</dbReference>
<dbReference type="HOGENOM" id="CLU_031223_2_1_6"/>
<dbReference type="UniPathway" id="UPA00109">
    <property type="reaction ID" value="UER00187"/>
</dbReference>
<dbReference type="Proteomes" id="UP000000584">
    <property type="component" value="Chromosome 1"/>
</dbReference>
<dbReference type="GO" id="GO:0009986">
    <property type="term" value="C:cell surface"/>
    <property type="evidence" value="ECO:0007669"/>
    <property type="project" value="UniProtKB-SubCell"/>
</dbReference>
<dbReference type="GO" id="GO:0005576">
    <property type="term" value="C:extracellular region"/>
    <property type="evidence" value="ECO:0007669"/>
    <property type="project" value="UniProtKB-SubCell"/>
</dbReference>
<dbReference type="GO" id="GO:0000015">
    <property type="term" value="C:phosphopyruvate hydratase complex"/>
    <property type="evidence" value="ECO:0000318"/>
    <property type="project" value="GO_Central"/>
</dbReference>
<dbReference type="GO" id="GO:0000287">
    <property type="term" value="F:magnesium ion binding"/>
    <property type="evidence" value="ECO:0007669"/>
    <property type="project" value="UniProtKB-UniRule"/>
</dbReference>
<dbReference type="GO" id="GO:0004634">
    <property type="term" value="F:phosphopyruvate hydratase activity"/>
    <property type="evidence" value="ECO:0000318"/>
    <property type="project" value="GO_Central"/>
</dbReference>
<dbReference type="GO" id="GO:0006096">
    <property type="term" value="P:glycolytic process"/>
    <property type="evidence" value="ECO:0000318"/>
    <property type="project" value="GO_Central"/>
</dbReference>
<dbReference type="CDD" id="cd03313">
    <property type="entry name" value="enolase"/>
    <property type="match status" value="1"/>
</dbReference>
<dbReference type="FunFam" id="3.20.20.120:FF:000001">
    <property type="entry name" value="Enolase"/>
    <property type="match status" value="1"/>
</dbReference>
<dbReference type="FunFam" id="3.30.390.10:FF:000001">
    <property type="entry name" value="Enolase"/>
    <property type="match status" value="1"/>
</dbReference>
<dbReference type="Gene3D" id="3.20.20.120">
    <property type="entry name" value="Enolase-like C-terminal domain"/>
    <property type="match status" value="1"/>
</dbReference>
<dbReference type="Gene3D" id="3.30.390.10">
    <property type="entry name" value="Enolase-like, N-terminal domain"/>
    <property type="match status" value="1"/>
</dbReference>
<dbReference type="HAMAP" id="MF_00318">
    <property type="entry name" value="Enolase"/>
    <property type="match status" value="1"/>
</dbReference>
<dbReference type="InterPro" id="IPR000941">
    <property type="entry name" value="Enolase"/>
</dbReference>
<dbReference type="InterPro" id="IPR036849">
    <property type="entry name" value="Enolase-like_C_sf"/>
</dbReference>
<dbReference type="InterPro" id="IPR029017">
    <property type="entry name" value="Enolase-like_N"/>
</dbReference>
<dbReference type="InterPro" id="IPR020810">
    <property type="entry name" value="Enolase_C"/>
</dbReference>
<dbReference type="InterPro" id="IPR020809">
    <property type="entry name" value="Enolase_CS"/>
</dbReference>
<dbReference type="InterPro" id="IPR020811">
    <property type="entry name" value="Enolase_N"/>
</dbReference>
<dbReference type="NCBIfam" id="TIGR01060">
    <property type="entry name" value="eno"/>
    <property type="match status" value="1"/>
</dbReference>
<dbReference type="PANTHER" id="PTHR11902">
    <property type="entry name" value="ENOLASE"/>
    <property type="match status" value="1"/>
</dbReference>
<dbReference type="PANTHER" id="PTHR11902:SF1">
    <property type="entry name" value="ENOLASE"/>
    <property type="match status" value="1"/>
</dbReference>
<dbReference type="Pfam" id="PF00113">
    <property type="entry name" value="Enolase_C"/>
    <property type="match status" value="1"/>
</dbReference>
<dbReference type="Pfam" id="PF03952">
    <property type="entry name" value="Enolase_N"/>
    <property type="match status" value="1"/>
</dbReference>
<dbReference type="PIRSF" id="PIRSF001400">
    <property type="entry name" value="Enolase"/>
    <property type="match status" value="1"/>
</dbReference>
<dbReference type="PRINTS" id="PR00148">
    <property type="entry name" value="ENOLASE"/>
</dbReference>
<dbReference type="SFLD" id="SFLDS00001">
    <property type="entry name" value="Enolase"/>
    <property type="match status" value="1"/>
</dbReference>
<dbReference type="SFLD" id="SFLDF00002">
    <property type="entry name" value="enolase"/>
    <property type="match status" value="1"/>
</dbReference>
<dbReference type="SMART" id="SM01192">
    <property type="entry name" value="Enolase_C"/>
    <property type="match status" value="1"/>
</dbReference>
<dbReference type="SMART" id="SM01193">
    <property type="entry name" value="Enolase_N"/>
    <property type="match status" value="1"/>
</dbReference>
<dbReference type="SUPFAM" id="SSF51604">
    <property type="entry name" value="Enolase C-terminal domain-like"/>
    <property type="match status" value="1"/>
</dbReference>
<dbReference type="SUPFAM" id="SSF54826">
    <property type="entry name" value="Enolase N-terminal domain-like"/>
    <property type="match status" value="1"/>
</dbReference>
<dbReference type="PROSITE" id="PS00164">
    <property type="entry name" value="ENOLASE"/>
    <property type="match status" value="1"/>
</dbReference>
<comment type="function">
    <text evidence="1">Catalyzes the reversible conversion of 2-phosphoglycerate (2-PG) into phosphoenolpyruvate (PEP). It is essential for the degradation of carbohydrates via glycolysis.</text>
</comment>
<comment type="catalytic activity">
    <reaction evidence="1">
        <text>(2R)-2-phosphoglycerate = phosphoenolpyruvate + H2O</text>
        <dbReference type="Rhea" id="RHEA:10164"/>
        <dbReference type="ChEBI" id="CHEBI:15377"/>
        <dbReference type="ChEBI" id="CHEBI:58289"/>
        <dbReference type="ChEBI" id="CHEBI:58702"/>
        <dbReference type="EC" id="4.2.1.11"/>
    </reaction>
</comment>
<comment type="cofactor">
    <cofactor evidence="1">
        <name>Mg(2+)</name>
        <dbReference type="ChEBI" id="CHEBI:18420"/>
    </cofactor>
    <text evidence="1">Binds a second Mg(2+) ion via substrate during catalysis.</text>
</comment>
<comment type="pathway">
    <text evidence="1">Carbohydrate degradation; glycolysis; pyruvate from D-glyceraldehyde 3-phosphate: step 4/5.</text>
</comment>
<comment type="subunit">
    <text evidence="1">Component of the RNA degradosome, a multiprotein complex involved in RNA processing and mRNA degradation.</text>
</comment>
<comment type="subcellular location">
    <subcellularLocation>
        <location evidence="1">Cytoplasm</location>
    </subcellularLocation>
    <subcellularLocation>
        <location evidence="1">Secreted</location>
    </subcellularLocation>
    <subcellularLocation>
        <location evidence="1">Cell surface</location>
    </subcellularLocation>
    <text evidence="1">Fractions of enolase are present in both the cytoplasm and on the cell surface.</text>
</comment>
<comment type="similarity">
    <text evidence="1">Belongs to the enolase family.</text>
</comment>
<reference key="1">
    <citation type="journal article" date="2000" name="Nature">
        <title>DNA sequence of both chromosomes of the cholera pathogen Vibrio cholerae.</title>
        <authorList>
            <person name="Heidelberg J.F."/>
            <person name="Eisen J.A."/>
            <person name="Nelson W.C."/>
            <person name="Clayton R.A."/>
            <person name="Gwinn M.L."/>
            <person name="Dodson R.J."/>
            <person name="Haft D.H."/>
            <person name="Hickey E.K."/>
            <person name="Peterson J.D."/>
            <person name="Umayam L.A."/>
            <person name="Gill S.R."/>
            <person name="Nelson K.E."/>
            <person name="Read T.D."/>
            <person name="Tettelin H."/>
            <person name="Richardson D.L."/>
            <person name="Ermolaeva M.D."/>
            <person name="Vamathevan J.J."/>
            <person name="Bass S."/>
            <person name="Qin H."/>
            <person name="Dragoi I."/>
            <person name="Sellers P."/>
            <person name="McDonald L.A."/>
            <person name="Utterback T.R."/>
            <person name="Fleischmann R.D."/>
            <person name="Nierman W.C."/>
            <person name="White O."/>
            <person name="Salzberg S.L."/>
            <person name="Smith H.O."/>
            <person name="Colwell R.R."/>
            <person name="Mekalanos J.J."/>
            <person name="Venter J.C."/>
            <person name="Fraser C.M."/>
        </authorList>
    </citation>
    <scope>NUCLEOTIDE SEQUENCE [LARGE SCALE GENOMIC DNA]</scope>
    <source>
        <strain>ATCC 39315 / El Tor Inaba N16961</strain>
    </source>
</reference>
<feature type="chain" id="PRO_0000134003" description="Enolase">
    <location>
        <begin position="1"/>
        <end position="433"/>
    </location>
</feature>
<feature type="active site" description="Proton donor" evidence="1">
    <location>
        <position position="209"/>
    </location>
</feature>
<feature type="active site" description="Proton acceptor" evidence="1">
    <location>
        <position position="343"/>
    </location>
</feature>
<feature type="binding site" evidence="1">
    <location>
        <position position="167"/>
    </location>
    <ligand>
        <name>(2R)-2-phosphoglycerate</name>
        <dbReference type="ChEBI" id="CHEBI:58289"/>
    </ligand>
</feature>
<feature type="binding site" evidence="1">
    <location>
        <position position="246"/>
    </location>
    <ligand>
        <name>Mg(2+)</name>
        <dbReference type="ChEBI" id="CHEBI:18420"/>
    </ligand>
</feature>
<feature type="binding site" evidence="1">
    <location>
        <position position="291"/>
    </location>
    <ligand>
        <name>Mg(2+)</name>
        <dbReference type="ChEBI" id="CHEBI:18420"/>
    </ligand>
</feature>
<feature type="binding site" evidence="1">
    <location>
        <position position="318"/>
    </location>
    <ligand>
        <name>Mg(2+)</name>
        <dbReference type="ChEBI" id="CHEBI:18420"/>
    </ligand>
</feature>
<feature type="binding site" evidence="1">
    <location>
        <position position="343"/>
    </location>
    <ligand>
        <name>(2R)-2-phosphoglycerate</name>
        <dbReference type="ChEBI" id="CHEBI:58289"/>
    </ligand>
</feature>
<feature type="binding site" evidence="1">
    <location>
        <position position="372"/>
    </location>
    <ligand>
        <name>(2R)-2-phosphoglycerate</name>
        <dbReference type="ChEBI" id="CHEBI:58289"/>
    </ligand>
</feature>
<feature type="binding site" evidence="1">
    <location>
        <position position="373"/>
    </location>
    <ligand>
        <name>(2R)-2-phosphoglycerate</name>
        <dbReference type="ChEBI" id="CHEBI:58289"/>
    </ligand>
</feature>
<feature type="binding site" evidence="1">
    <location>
        <position position="394"/>
    </location>
    <ligand>
        <name>(2R)-2-phosphoglycerate</name>
        <dbReference type="ChEBI" id="CHEBI:58289"/>
    </ligand>
</feature>
<accession>Q9KPC5</accession>
<keyword id="KW-0963">Cytoplasm</keyword>
<keyword id="KW-0324">Glycolysis</keyword>
<keyword id="KW-0456">Lyase</keyword>
<keyword id="KW-0460">Magnesium</keyword>
<keyword id="KW-0479">Metal-binding</keyword>
<keyword id="KW-1185">Reference proteome</keyword>
<keyword id="KW-0964">Secreted</keyword>